<keyword id="KW-1003">Cell membrane</keyword>
<keyword id="KW-0342">GTP-binding</keyword>
<keyword id="KW-0378">Hydrolase</keyword>
<keyword id="KW-0472">Membrane</keyword>
<keyword id="KW-0547">Nucleotide-binding</keyword>
<keyword id="KW-0648">Protein biosynthesis</keyword>
<reference key="1">
    <citation type="journal article" date="2006" name="Genome Res.">
        <title>Skewed genomic variability in strains of the toxigenic bacterial pathogen, Clostridium perfringens.</title>
        <authorList>
            <person name="Myers G.S.A."/>
            <person name="Rasko D.A."/>
            <person name="Cheung J.K."/>
            <person name="Ravel J."/>
            <person name="Seshadri R."/>
            <person name="DeBoy R.T."/>
            <person name="Ren Q."/>
            <person name="Varga J."/>
            <person name="Awad M.M."/>
            <person name="Brinkac L.M."/>
            <person name="Daugherty S.C."/>
            <person name="Haft D.H."/>
            <person name="Dodson R.J."/>
            <person name="Madupu R."/>
            <person name="Nelson W.C."/>
            <person name="Rosovitz M.J."/>
            <person name="Sullivan S.A."/>
            <person name="Khouri H."/>
            <person name="Dimitrov G.I."/>
            <person name="Watkins K.L."/>
            <person name="Mulligan S."/>
            <person name="Benton J."/>
            <person name="Radune D."/>
            <person name="Fisher D.J."/>
            <person name="Atkins H.S."/>
            <person name="Hiscox T."/>
            <person name="Jost B.H."/>
            <person name="Billington S.J."/>
            <person name="Songer J.G."/>
            <person name="McClane B.A."/>
            <person name="Titball R.W."/>
            <person name="Rood J.I."/>
            <person name="Melville S.B."/>
            <person name="Paulsen I.T."/>
        </authorList>
    </citation>
    <scope>NUCLEOTIDE SEQUENCE [LARGE SCALE GENOMIC DNA]</scope>
    <source>
        <strain>ATCC 13124 / DSM 756 / JCM 1290 / NCIMB 6125 / NCTC 8237 / S 107 / Type A</strain>
    </source>
</reference>
<proteinExistence type="inferred from homology"/>
<protein>
    <recommendedName>
        <fullName evidence="1">Elongation factor 4</fullName>
        <shortName evidence="1">EF-4</shortName>
        <ecNumber evidence="1">3.6.5.n1</ecNumber>
    </recommendedName>
    <alternativeName>
        <fullName evidence="1">Ribosomal back-translocase LepA</fullName>
    </alternativeName>
</protein>
<dbReference type="EC" id="3.6.5.n1" evidence="1"/>
<dbReference type="EMBL" id="CP000246">
    <property type="protein sequence ID" value="ABG84115.1"/>
    <property type="molecule type" value="Genomic_DNA"/>
</dbReference>
<dbReference type="RefSeq" id="WP_003455062.1">
    <property type="nucleotide sequence ID" value="NC_008261.1"/>
</dbReference>
<dbReference type="SMR" id="Q0TNS2"/>
<dbReference type="STRING" id="195103.CPF_2295"/>
<dbReference type="PaxDb" id="195103-CPF_2295"/>
<dbReference type="GeneID" id="93001424"/>
<dbReference type="KEGG" id="cpf:CPF_2295"/>
<dbReference type="eggNOG" id="COG0481">
    <property type="taxonomic scope" value="Bacteria"/>
</dbReference>
<dbReference type="HOGENOM" id="CLU_009995_3_3_9"/>
<dbReference type="Proteomes" id="UP000001823">
    <property type="component" value="Chromosome"/>
</dbReference>
<dbReference type="GO" id="GO:0005886">
    <property type="term" value="C:plasma membrane"/>
    <property type="evidence" value="ECO:0007669"/>
    <property type="project" value="UniProtKB-SubCell"/>
</dbReference>
<dbReference type="GO" id="GO:0005525">
    <property type="term" value="F:GTP binding"/>
    <property type="evidence" value="ECO:0007669"/>
    <property type="project" value="UniProtKB-UniRule"/>
</dbReference>
<dbReference type="GO" id="GO:0003924">
    <property type="term" value="F:GTPase activity"/>
    <property type="evidence" value="ECO:0007669"/>
    <property type="project" value="UniProtKB-UniRule"/>
</dbReference>
<dbReference type="GO" id="GO:0043022">
    <property type="term" value="F:ribosome binding"/>
    <property type="evidence" value="ECO:0007669"/>
    <property type="project" value="UniProtKB-UniRule"/>
</dbReference>
<dbReference type="GO" id="GO:0003746">
    <property type="term" value="F:translation elongation factor activity"/>
    <property type="evidence" value="ECO:0007669"/>
    <property type="project" value="UniProtKB-UniRule"/>
</dbReference>
<dbReference type="GO" id="GO:0045727">
    <property type="term" value="P:positive regulation of translation"/>
    <property type="evidence" value="ECO:0007669"/>
    <property type="project" value="UniProtKB-UniRule"/>
</dbReference>
<dbReference type="CDD" id="cd03699">
    <property type="entry name" value="EF4_II"/>
    <property type="match status" value="1"/>
</dbReference>
<dbReference type="CDD" id="cd16260">
    <property type="entry name" value="EF4_III"/>
    <property type="match status" value="1"/>
</dbReference>
<dbReference type="CDD" id="cd01890">
    <property type="entry name" value="LepA"/>
    <property type="match status" value="1"/>
</dbReference>
<dbReference type="CDD" id="cd03709">
    <property type="entry name" value="lepA_C"/>
    <property type="match status" value="1"/>
</dbReference>
<dbReference type="FunFam" id="3.40.50.300:FF:000078">
    <property type="entry name" value="Elongation factor 4"/>
    <property type="match status" value="1"/>
</dbReference>
<dbReference type="FunFam" id="2.40.30.10:FF:000015">
    <property type="entry name" value="Translation factor GUF1, mitochondrial"/>
    <property type="match status" value="1"/>
</dbReference>
<dbReference type="FunFam" id="3.30.70.240:FF:000007">
    <property type="entry name" value="Translation factor GUF1, mitochondrial"/>
    <property type="match status" value="1"/>
</dbReference>
<dbReference type="FunFam" id="3.30.70.2570:FF:000001">
    <property type="entry name" value="Translation factor GUF1, mitochondrial"/>
    <property type="match status" value="1"/>
</dbReference>
<dbReference type="FunFam" id="3.30.70.870:FF:000004">
    <property type="entry name" value="Translation factor GUF1, mitochondrial"/>
    <property type="match status" value="1"/>
</dbReference>
<dbReference type="Gene3D" id="3.30.70.240">
    <property type="match status" value="1"/>
</dbReference>
<dbReference type="Gene3D" id="3.30.70.2570">
    <property type="entry name" value="Elongation factor 4, C-terminal domain"/>
    <property type="match status" value="1"/>
</dbReference>
<dbReference type="Gene3D" id="3.30.70.870">
    <property type="entry name" value="Elongation Factor G (Translational Gtpase), domain 3"/>
    <property type="match status" value="1"/>
</dbReference>
<dbReference type="Gene3D" id="3.40.50.300">
    <property type="entry name" value="P-loop containing nucleotide triphosphate hydrolases"/>
    <property type="match status" value="1"/>
</dbReference>
<dbReference type="Gene3D" id="2.40.30.10">
    <property type="entry name" value="Translation factors"/>
    <property type="match status" value="1"/>
</dbReference>
<dbReference type="HAMAP" id="MF_00071">
    <property type="entry name" value="LepA"/>
    <property type="match status" value="1"/>
</dbReference>
<dbReference type="InterPro" id="IPR006297">
    <property type="entry name" value="EF-4"/>
</dbReference>
<dbReference type="InterPro" id="IPR035647">
    <property type="entry name" value="EFG_III/V"/>
</dbReference>
<dbReference type="InterPro" id="IPR000640">
    <property type="entry name" value="EFG_V-like"/>
</dbReference>
<dbReference type="InterPro" id="IPR004161">
    <property type="entry name" value="EFTu-like_2"/>
</dbReference>
<dbReference type="InterPro" id="IPR031157">
    <property type="entry name" value="G_TR_CS"/>
</dbReference>
<dbReference type="InterPro" id="IPR038363">
    <property type="entry name" value="LepA_C_sf"/>
</dbReference>
<dbReference type="InterPro" id="IPR013842">
    <property type="entry name" value="LepA_CTD"/>
</dbReference>
<dbReference type="InterPro" id="IPR035654">
    <property type="entry name" value="LepA_IV"/>
</dbReference>
<dbReference type="InterPro" id="IPR027417">
    <property type="entry name" value="P-loop_NTPase"/>
</dbReference>
<dbReference type="InterPro" id="IPR005225">
    <property type="entry name" value="Small_GTP-bd"/>
</dbReference>
<dbReference type="InterPro" id="IPR000795">
    <property type="entry name" value="T_Tr_GTP-bd_dom"/>
</dbReference>
<dbReference type="InterPro" id="IPR009000">
    <property type="entry name" value="Transl_B-barrel_sf"/>
</dbReference>
<dbReference type="NCBIfam" id="TIGR01393">
    <property type="entry name" value="lepA"/>
    <property type="match status" value="1"/>
</dbReference>
<dbReference type="NCBIfam" id="TIGR00231">
    <property type="entry name" value="small_GTP"/>
    <property type="match status" value="1"/>
</dbReference>
<dbReference type="PANTHER" id="PTHR43512:SF4">
    <property type="entry name" value="TRANSLATION FACTOR GUF1 HOMOLOG, CHLOROPLASTIC"/>
    <property type="match status" value="1"/>
</dbReference>
<dbReference type="PANTHER" id="PTHR43512">
    <property type="entry name" value="TRANSLATION FACTOR GUF1-RELATED"/>
    <property type="match status" value="1"/>
</dbReference>
<dbReference type="Pfam" id="PF00679">
    <property type="entry name" value="EFG_C"/>
    <property type="match status" value="1"/>
</dbReference>
<dbReference type="Pfam" id="PF00009">
    <property type="entry name" value="GTP_EFTU"/>
    <property type="match status" value="1"/>
</dbReference>
<dbReference type="Pfam" id="PF03144">
    <property type="entry name" value="GTP_EFTU_D2"/>
    <property type="match status" value="1"/>
</dbReference>
<dbReference type="Pfam" id="PF06421">
    <property type="entry name" value="LepA_C"/>
    <property type="match status" value="1"/>
</dbReference>
<dbReference type="PRINTS" id="PR00315">
    <property type="entry name" value="ELONGATNFCT"/>
</dbReference>
<dbReference type="SMART" id="SM00838">
    <property type="entry name" value="EFG_C"/>
    <property type="match status" value="1"/>
</dbReference>
<dbReference type="SUPFAM" id="SSF54980">
    <property type="entry name" value="EF-G C-terminal domain-like"/>
    <property type="match status" value="2"/>
</dbReference>
<dbReference type="SUPFAM" id="SSF52540">
    <property type="entry name" value="P-loop containing nucleoside triphosphate hydrolases"/>
    <property type="match status" value="1"/>
</dbReference>
<dbReference type="SUPFAM" id="SSF50447">
    <property type="entry name" value="Translation proteins"/>
    <property type="match status" value="1"/>
</dbReference>
<dbReference type="PROSITE" id="PS00301">
    <property type="entry name" value="G_TR_1"/>
    <property type="match status" value="1"/>
</dbReference>
<dbReference type="PROSITE" id="PS51722">
    <property type="entry name" value="G_TR_2"/>
    <property type="match status" value="1"/>
</dbReference>
<gene>
    <name evidence="1" type="primary">lepA</name>
    <name type="ordered locus">CPF_2295</name>
</gene>
<evidence type="ECO:0000255" key="1">
    <source>
        <dbReference type="HAMAP-Rule" id="MF_00071"/>
    </source>
</evidence>
<feature type="chain" id="PRO_0000265649" description="Elongation factor 4">
    <location>
        <begin position="1"/>
        <end position="600"/>
    </location>
</feature>
<feature type="domain" description="tr-type G">
    <location>
        <begin position="5"/>
        <end position="187"/>
    </location>
</feature>
<feature type="binding site" evidence="1">
    <location>
        <begin position="17"/>
        <end position="22"/>
    </location>
    <ligand>
        <name>GTP</name>
        <dbReference type="ChEBI" id="CHEBI:37565"/>
    </ligand>
</feature>
<feature type="binding site" evidence="1">
    <location>
        <begin position="134"/>
        <end position="137"/>
    </location>
    <ligand>
        <name>GTP</name>
        <dbReference type="ChEBI" id="CHEBI:37565"/>
    </ligand>
</feature>
<organism>
    <name type="scientific">Clostridium perfringens (strain ATCC 13124 / DSM 756 / JCM 1290 / NCIMB 6125 / NCTC 8237 / Type A)</name>
    <dbReference type="NCBI Taxonomy" id="195103"/>
    <lineage>
        <taxon>Bacteria</taxon>
        <taxon>Bacillati</taxon>
        <taxon>Bacillota</taxon>
        <taxon>Clostridia</taxon>
        <taxon>Eubacteriales</taxon>
        <taxon>Clostridiaceae</taxon>
        <taxon>Clostridium</taxon>
    </lineage>
</organism>
<accession>Q0TNS2</accession>
<sequence>MDKKKYIRNFSIVAHIDHGKSTLADRLLEKTGTLTQREMEQQVLDTMELEKERGITIKSQAARLIYKRENGEEYILNLIDTPGHVDFTYEVSRSLAACEGAILVVDATQGIQAQTLANCYLALDNDLEIVPVINKVDLASARPDEIKQEIEDVIGIEAEDAPLVSAKTGLNIEDVLEEIVEKVPAPEGDENAPLKALIFDSYYDSYKGVVCHIRVKDGKVKPGTKIKLMSTDKVYEVVETGVFTPALMPLKEGLSAGEVGYITASIKNVRDARVGDTVTEAARPTEEALPGYKPAIPMVYSGIYPVDGAKYEELKEALEKLQINDAALSFEPETSVALGFGFRCGFLGLLHMEIIQERVEREFNLDIITTAPSVIYKVTKTNGESFDLTNPTNLPPMTEIAYMEEPVVKASIITPTDYTGAVMELCQDRRGKFIDMQYLEETRVVIHYEIPLNEIVYDFFDTLKSKTRGYASLDYELKGYEQSKLVKLDILLNGDNVDALSMIVPEVKAYQRGRAIAEKLKEIIPRHMFEVPIQAAVGSKIIARETVKAMRKDVLAKCYGGDISRKKKLLEKQKEGKKRMRQLGTVEVPQEAFMSVLKVD</sequence>
<name>LEPA_CLOP1</name>
<comment type="function">
    <text evidence="1">Required for accurate and efficient protein synthesis under certain stress conditions. May act as a fidelity factor of the translation reaction, by catalyzing a one-codon backward translocation of tRNAs on improperly translocated ribosomes. Back-translocation proceeds from a post-translocation (POST) complex to a pre-translocation (PRE) complex, thus giving elongation factor G a second chance to translocate the tRNAs correctly. Binds to ribosomes in a GTP-dependent manner.</text>
</comment>
<comment type="catalytic activity">
    <reaction evidence="1">
        <text>GTP + H2O = GDP + phosphate + H(+)</text>
        <dbReference type="Rhea" id="RHEA:19669"/>
        <dbReference type="ChEBI" id="CHEBI:15377"/>
        <dbReference type="ChEBI" id="CHEBI:15378"/>
        <dbReference type="ChEBI" id="CHEBI:37565"/>
        <dbReference type="ChEBI" id="CHEBI:43474"/>
        <dbReference type="ChEBI" id="CHEBI:58189"/>
        <dbReference type="EC" id="3.6.5.n1"/>
    </reaction>
</comment>
<comment type="subcellular location">
    <subcellularLocation>
        <location evidence="1">Cell membrane</location>
        <topology evidence="1">Peripheral membrane protein</topology>
        <orientation evidence="1">Cytoplasmic side</orientation>
    </subcellularLocation>
</comment>
<comment type="similarity">
    <text evidence="1">Belongs to the TRAFAC class translation factor GTPase superfamily. Classic translation factor GTPase family. LepA subfamily.</text>
</comment>